<protein>
    <recommendedName>
        <fullName evidence="1">Valine--tRNA ligase</fullName>
        <ecNumber evidence="1">6.1.1.9</ecNumber>
    </recommendedName>
    <alternativeName>
        <fullName evidence="1">Valyl-tRNA synthetase</fullName>
        <shortName evidence="1">ValRS</shortName>
    </alternativeName>
</protein>
<proteinExistence type="inferred from homology"/>
<reference key="1">
    <citation type="journal article" date="2004" name="J. Infect. Dis.">
        <title>Progress toward characterization of the group A Streptococcus metagenome: complete genome sequence of a macrolide-resistant serotype M6 strain.</title>
        <authorList>
            <person name="Banks D.J."/>
            <person name="Porcella S.F."/>
            <person name="Barbian K.D."/>
            <person name="Beres S.B."/>
            <person name="Philips L.E."/>
            <person name="Voyich J.M."/>
            <person name="DeLeo F.R."/>
            <person name="Martin J.M."/>
            <person name="Somerville G.A."/>
            <person name="Musser J.M."/>
        </authorList>
    </citation>
    <scope>NUCLEOTIDE SEQUENCE [LARGE SCALE GENOMIC DNA]</scope>
    <source>
        <strain>ATCC BAA-946 / MGAS10394</strain>
    </source>
</reference>
<sequence length="882" mass="100976">MTELSPKYNPAEVEAGRYQKWLDADVFKPSGDQKAKPYSIVIPPPNVTGKLHLGHAWDTTLQDIIIRQKRMQGFDTLWLPGMDHAGIATQAKVEERLREQGISRYDLGRDKFLDKVWEWKDEYATTIKEQWGKMGLSVDYSRERFTLDEGLSKAVRKVFVDLYKKGWIYRGEFIINWDPAARTALSDIEVVHKDVEGAFYHMNYMLEDGSRALQVATTRPETMFGDVAVAVNPEDPRYKDLIGKHVLLPIVNKLIPIVGDEHADPEFGTGVVKITPAHDPNDFEVGQRHNLPQVNVMNDDGTMNELAGDFAGMDRFEARQATVAKLEELGALVNIEKRVHSVGHSERSGAVVEPRLSTQWFVKMDELAKQAMDNQETDDRVDFYPPRFNDTFLQWMENVHDWVISRQLWWGHQIPAWYNAEGEIYVGEEAPEGDGWTQDEDVLDTWFSSALWPFSTMGWPDTDSEDFKRYFPTSTLVTGYDIIFFWVSRMIFQSLEFTERQPFQNVLIHGLIRDEEGRKMSKSLGNGIDPMDVIEKYGADSLRWFLSNGSAPGQDVRFSYEKMDASWNFINKIWNISRYILMNNEGLTLEEAESNVAKVAASEAGNVTDQWILHNLNETIAKVTENFDKFEFGVAGHILYNFIWEEFANWYVELTKEVLYSDNEAEKVITRSVLLYTLDKILRLLHPIMPFVTEEIYAQYAQGSIVTAAYPTVTPAFENEAAHKGVESLKDFIRAVRNARAEVNVAPSKPITILVKTADSELEDFFNSNINYIKRFTNPEKLEISSAIAAPELAMTSIITGAEIYLPLADLLNVEEELARLDKELAKWQKELDMVGKKLGNERFVANAKPEVVQKEKDKQADYQAKYDATQERIVEMHKLVK</sequence>
<dbReference type="EC" id="6.1.1.9" evidence="1"/>
<dbReference type="EMBL" id="CP000003">
    <property type="protein sequence ID" value="AAT87445.1"/>
    <property type="molecule type" value="Genomic_DNA"/>
</dbReference>
<dbReference type="RefSeq" id="WP_011184776.1">
    <property type="nucleotide sequence ID" value="NC_006086.1"/>
</dbReference>
<dbReference type="SMR" id="Q5XAW8"/>
<dbReference type="KEGG" id="spa:M6_Spy1310"/>
<dbReference type="HOGENOM" id="CLU_001493_0_2_9"/>
<dbReference type="Proteomes" id="UP000001167">
    <property type="component" value="Chromosome"/>
</dbReference>
<dbReference type="GO" id="GO:0005829">
    <property type="term" value="C:cytosol"/>
    <property type="evidence" value="ECO:0007669"/>
    <property type="project" value="TreeGrafter"/>
</dbReference>
<dbReference type="GO" id="GO:0002161">
    <property type="term" value="F:aminoacyl-tRNA deacylase activity"/>
    <property type="evidence" value="ECO:0007669"/>
    <property type="project" value="InterPro"/>
</dbReference>
<dbReference type="GO" id="GO:0005524">
    <property type="term" value="F:ATP binding"/>
    <property type="evidence" value="ECO:0007669"/>
    <property type="project" value="UniProtKB-UniRule"/>
</dbReference>
<dbReference type="GO" id="GO:0004832">
    <property type="term" value="F:valine-tRNA ligase activity"/>
    <property type="evidence" value="ECO:0007669"/>
    <property type="project" value="UniProtKB-UniRule"/>
</dbReference>
<dbReference type="GO" id="GO:0006438">
    <property type="term" value="P:valyl-tRNA aminoacylation"/>
    <property type="evidence" value="ECO:0007669"/>
    <property type="project" value="UniProtKB-UniRule"/>
</dbReference>
<dbReference type="CDD" id="cd07962">
    <property type="entry name" value="Anticodon_Ia_Val"/>
    <property type="match status" value="1"/>
</dbReference>
<dbReference type="CDD" id="cd00817">
    <property type="entry name" value="ValRS_core"/>
    <property type="match status" value="1"/>
</dbReference>
<dbReference type="FunFam" id="1.10.287.380:FF:000001">
    <property type="entry name" value="Valine--tRNA ligase"/>
    <property type="match status" value="1"/>
</dbReference>
<dbReference type="FunFam" id="1.10.730.10:FF:000014">
    <property type="entry name" value="Valine--tRNA ligase"/>
    <property type="match status" value="1"/>
</dbReference>
<dbReference type="FunFam" id="3.40.50.620:FF:000032">
    <property type="entry name" value="Valine--tRNA ligase"/>
    <property type="match status" value="1"/>
</dbReference>
<dbReference type="FunFam" id="3.40.50.620:FF:000098">
    <property type="entry name" value="Valine--tRNA ligase"/>
    <property type="match status" value="1"/>
</dbReference>
<dbReference type="FunFam" id="3.90.740.10:FF:000005">
    <property type="entry name" value="Valine--tRNA ligase, mitochondrial"/>
    <property type="match status" value="1"/>
</dbReference>
<dbReference type="Gene3D" id="3.40.50.620">
    <property type="entry name" value="HUPs"/>
    <property type="match status" value="2"/>
</dbReference>
<dbReference type="Gene3D" id="1.10.730.10">
    <property type="entry name" value="Isoleucyl-tRNA Synthetase, Domain 1"/>
    <property type="match status" value="1"/>
</dbReference>
<dbReference type="Gene3D" id="1.10.287.380">
    <property type="entry name" value="Valyl-tRNA synthetase, C-terminal domain"/>
    <property type="match status" value="1"/>
</dbReference>
<dbReference type="Gene3D" id="3.90.740.10">
    <property type="entry name" value="Valyl/Leucyl/Isoleucyl-tRNA synthetase, editing domain"/>
    <property type="match status" value="1"/>
</dbReference>
<dbReference type="HAMAP" id="MF_02004">
    <property type="entry name" value="Val_tRNA_synth_type1"/>
    <property type="match status" value="1"/>
</dbReference>
<dbReference type="InterPro" id="IPR001412">
    <property type="entry name" value="aa-tRNA-synth_I_CS"/>
</dbReference>
<dbReference type="InterPro" id="IPR002300">
    <property type="entry name" value="aa-tRNA-synth_Ia"/>
</dbReference>
<dbReference type="InterPro" id="IPR033705">
    <property type="entry name" value="Anticodon_Ia_Val"/>
</dbReference>
<dbReference type="InterPro" id="IPR013155">
    <property type="entry name" value="M/V/L/I-tRNA-synth_anticd-bd"/>
</dbReference>
<dbReference type="InterPro" id="IPR014729">
    <property type="entry name" value="Rossmann-like_a/b/a_fold"/>
</dbReference>
<dbReference type="InterPro" id="IPR010978">
    <property type="entry name" value="tRNA-bd_arm"/>
</dbReference>
<dbReference type="InterPro" id="IPR009080">
    <property type="entry name" value="tRNAsynth_Ia_anticodon-bd"/>
</dbReference>
<dbReference type="InterPro" id="IPR037118">
    <property type="entry name" value="Val-tRNA_synth_C_sf"/>
</dbReference>
<dbReference type="InterPro" id="IPR019499">
    <property type="entry name" value="Val-tRNA_synth_tRNA-bd"/>
</dbReference>
<dbReference type="InterPro" id="IPR009008">
    <property type="entry name" value="Val/Leu/Ile-tRNA-synth_edit"/>
</dbReference>
<dbReference type="InterPro" id="IPR002303">
    <property type="entry name" value="Valyl-tRNA_ligase"/>
</dbReference>
<dbReference type="NCBIfam" id="NF004349">
    <property type="entry name" value="PRK05729.1"/>
    <property type="match status" value="1"/>
</dbReference>
<dbReference type="NCBIfam" id="TIGR00422">
    <property type="entry name" value="valS"/>
    <property type="match status" value="1"/>
</dbReference>
<dbReference type="PANTHER" id="PTHR11946:SF93">
    <property type="entry name" value="VALINE--TRNA LIGASE, CHLOROPLASTIC_MITOCHONDRIAL 2"/>
    <property type="match status" value="1"/>
</dbReference>
<dbReference type="PANTHER" id="PTHR11946">
    <property type="entry name" value="VALYL-TRNA SYNTHETASES"/>
    <property type="match status" value="1"/>
</dbReference>
<dbReference type="Pfam" id="PF08264">
    <property type="entry name" value="Anticodon_1"/>
    <property type="match status" value="1"/>
</dbReference>
<dbReference type="Pfam" id="PF00133">
    <property type="entry name" value="tRNA-synt_1"/>
    <property type="match status" value="1"/>
</dbReference>
<dbReference type="Pfam" id="PF10458">
    <property type="entry name" value="Val_tRNA-synt_C"/>
    <property type="match status" value="1"/>
</dbReference>
<dbReference type="PRINTS" id="PR00986">
    <property type="entry name" value="TRNASYNTHVAL"/>
</dbReference>
<dbReference type="SUPFAM" id="SSF47323">
    <property type="entry name" value="Anticodon-binding domain of a subclass of class I aminoacyl-tRNA synthetases"/>
    <property type="match status" value="1"/>
</dbReference>
<dbReference type="SUPFAM" id="SSF52374">
    <property type="entry name" value="Nucleotidylyl transferase"/>
    <property type="match status" value="1"/>
</dbReference>
<dbReference type="SUPFAM" id="SSF46589">
    <property type="entry name" value="tRNA-binding arm"/>
    <property type="match status" value="1"/>
</dbReference>
<dbReference type="SUPFAM" id="SSF50677">
    <property type="entry name" value="ValRS/IleRS/LeuRS editing domain"/>
    <property type="match status" value="1"/>
</dbReference>
<dbReference type="PROSITE" id="PS00178">
    <property type="entry name" value="AA_TRNA_LIGASE_I"/>
    <property type="match status" value="1"/>
</dbReference>
<evidence type="ECO:0000255" key="1">
    <source>
        <dbReference type="HAMAP-Rule" id="MF_02004"/>
    </source>
</evidence>
<accession>Q5XAW8</accession>
<organism>
    <name type="scientific">Streptococcus pyogenes serotype M6 (strain ATCC BAA-946 / MGAS10394)</name>
    <dbReference type="NCBI Taxonomy" id="286636"/>
    <lineage>
        <taxon>Bacteria</taxon>
        <taxon>Bacillati</taxon>
        <taxon>Bacillota</taxon>
        <taxon>Bacilli</taxon>
        <taxon>Lactobacillales</taxon>
        <taxon>Streptococcaceae</taxon>
        <taxon>Streptococcus</taxon>
    </lineage>
</organism>
<gene>
    <name evidence="1" type="primary">valS</name>
    <name type="ordered locus">M6_Spy1310</name>
</gene>
<name>SYV_STRP6</name>
<comment type="function">
    <text evidence="1">Catalyzes the attachment of valine to tRNA(Val). As ValRS can inadvertently accommodate and process structurally similar amino acids such as threonine, to avoid such errors, it has a 'posttransfer' editing activity that hydrolyzes mischarged Thr-tRNA(Val) in a tRNA-dependent manner.</text>
</comment>
<comment type="catalytic activity">
    <reaction evidence="1">
        <text>tRNA(Val) + L-valine + ATP = L-valyl-tRNA(Val) + AMP + diphosphate</text>
        <dbReference type="Rhea" id="RHEA:10704"/>
        <dbReference type="Rhea" id="RHEA-COMP:9672"/>
        <dbReference type="Rhea" id="RHEA-COMP:9708"/>
        <dbReference type="ChEBI" id="CHEBI:30616"/>
        <dbReference type="ChEBI" id="CHEBI:33019"/>
        <dbReference type="ChEBI" id="CHEBI:57762"/>
        <dbReference type="ChEBI" id="CHEBI:78442"/>
        <dbReference type="ChEBI" id="CHEBI:78537"/>
        <dbReference type="ChEBI" id="CHEBI:456215"/>
        <dbReference type="EC" id="6.1.1.9"/>
    </reaction>
</comment>
<comment type="subunit">
    <text evidence="1">Monomer.</text>
</comment>
<comment type="subcellular location">
    <subcellularLocation>
        <location evidence="1">Cytoplasm</location>
    </subcellularLocation>
</comment>
<comment type="domain">
    <text evidence="1">ValRS has two distinct active sites: one for aminoacylation and one for editing. The misactivated threonine is translocated from the active site to the editing site.</text>
</comment>
<comment type="domain">
    <text evidence="1">The C-terminal coiled-coil domain is crucial for aminoacylation activity.</text>
</comment>
<comment type="similarity">
    <text evidence="1">Belongs to the class-I aminoacyl-tRNA synthetase family. ValS type 1 subfamily.</text>
</comment>
<feature type="chain" id="PRO_0000224580" description="Valine--tRNA ligase">
    <location>
        <begin position="1"/>
        <end position="882"/>
    </location>
</feature>
<feature type="coiled-coil region" evidence="1">
    <location>
        <begin position="808"/>
        <end position="877"/>
    </location>
</feature>
<feature type="short sequence motif" description="'HIGH' region">
    <location>
        <begin position="45"/>
        <end position="55"/>
    </location>
</feature>
<feature type="short sequence motif" description="'KMSKS' region">
    <location>
        <begin position="519"/>
        <end position="523"/>
    </location>
</feature>
<feature type="binding site" evidence="1">
    <location>
        <position position="522"/>
    </location>
    <ligand>
        <name>ATP</name>
        <dbReference type="ChEBI" id="CHEBI:30616"/>
    </ligand>
</feature>
<keyword id="KW-0030">Aminoacyl-tRNA synthetase</keyword>
<keyword id="KW-0067">ATP-binding</keyword>
<keyword id="KW-0175">Coiled coil</keyword>
<keyword id="KW-0963">Cytoplasm</keyword>
<keyword id="KW-0436">Ligase</keyword>
<keyword id="KW-0547">Nucleotide-binding</keyword>
<keyword id="KW-0648">Protein biosynthesis</keyword>